<accession>Q62MN2</accession>
<name>FDHD_BURMA</name>
<sequence length="274" mass="29004">MSLSETVEPSGIVELAVRRRRGDAAETAVDRVGQEWPVALVFNGISHAVMMCTPRDLEAFAVGFAVSEGIVERGSDVKDIEVALHGAGPLPHAEVQLTVVQQAFAALKEKRRALAGRTGCGVCGIESIGLLDLVPQRLPDTGFLARLAPDAIARAARELPAHQALTRQTGGLHAAAWCDASGAIVHAFEDIGRHNALDKLIGTLTLTRADMANGFVFLSSRASYELVRKSARVGIPMVATISAPSSLAIEIARQAGLRLVSFCREAGYVDYGTA</sequence>
<keyword id="KW-0963">Cytoplasm</keyword>
<keyword id="KW-0501">Molybdenum cofactor biosynthesis</keyword>
<keyword id="KW-1185">Reference proteome</keyword>
<feature type="chain" id="PRO_0000152895" description="Sulfur carrier protein FdhD">
    <location>
        <begin position="1"/>
        <end position="274"/>
    </location>
</feature>
<feature type="active site" description="Cysteine persulfide intermediate" evidence="1">
    <location>
        <position position="120"/>
    </location>
</feature>
<dbReference type="EMBL" id="CP000010">
    <property type="protein sequence ID" value="AAU49024.1"/>
    <property type="molecule type" value="Genomic_DNA"/>
</dbReference>
<dbReference type="RefSeq" id="WP_004189566.1">
    <property type="nucleotide sequence ID" value="NC_006348.1"/>
</dbReference>
<dbReference type="RefSeq" id="YP_102036.1">
    <property type="nucleotide sequence ID" value="NC_006348.1"/>
</dbReference>
<dbReference type="SMR" id="Q62MN2"/>
<dbReference type="GeneID" id="92977979"/>
<dbReference type="KEGG" id="bma:BMA0201"/>
<dbReference type="PATRIC" id="fig|243160.12.peg.201"/>
<dbReference type="eggNOG" id="COG1526">
    <property type="taxonomic scope" value="Bacteria"/>
</dbReference>
<dbReference type="HOGENOM" id="CLU_056887_2_0_4"/>
<dbReference type="Proteomes" id="UP000006693">
    <property type="component" value="Chromosome 1"/>
</dbReference>
<dbReference type="GO" id="GO:0005737">
    <property type="term" value="C:cytoplasm"/>
    <property type="evidence" value="ECO:0007669"/>
    <property type="project" value="UniProtKB-SubCell"/>
</dbReference>
<dbReference type="GO" id="GO:0097163">
    <property type="term" value="F:sulfur carrier activity"/>
    <property type="evidence" value="ECO:0007669"/>
    <property type="project" value="UniProtKB-UniRule"/>
</dbReference>
<dbReference type="GO" id="GO:0016783">
    <property type="term" value="F:sulfurtransferase activity"/>
    <property type="evidence" value="ECO:0007669"/>
    <property type="project" value="InterPro"/>
</dbReference>
<dbReference type="GO" id="GO:0006777">
    <property type="term" value="P:Mo-molybdopterin cofactor biosynthetic process"/>
    <property type="evidence" value="ECO:0007669"/>
    <property type="project" value="UniProtKB-UniRule"/>
</dbReference>
<dbReference type="Gene3D" id="3.10.20.10">
    <property type="match status" value="1"/>
</dbReference>
<dbReference type="Gene3D" id="3.40.140.10">
    <property type="entry name" value="Cytidine Deaminase, domain 2"/>
    <property type="match status" value="1"/>
</dbReference>
<dbReference type="HAMAP" id="MF_00187">
    <property type="entry name" value="FdhD"/>
    <property type="match status" value="1"/>
</dbReference>
<dbReference type="InterPro" id="IPR016193">
    <property type="entry name" value="Cytidine_deaminase-like"/>
</dbReference>
<dbReference type="InterPro" id="IPR003786">
    <property type="entry name" value="FdhD"/>
</dbReference>
<dbReference type="NCBIfam" id="TIGR00129">
    <property type="entry name" value="fdhD_narQ"/>
    <property type="match status" value="1"/>
</dbReference>
<dbReference type="PANTHER" id="PTHR30592">
    <property type="entry name" value="FORMATE DEHYDROGENASE"/>
    <property type="match status" value="1"/>
</dbReference>
<dbReference type="PANTHER" id="PTHR30592:SF1">
    <property type="entry name" value="SULFUR CARRIER PROTEIN FDHD"/>
    <property type="match status" value="1"/>
</dbReference>
<dbReference type="Pfam" id="PF02634">
    <property type="entry name" value="FdhD-NarQ"/>
    <property type="match status" value="1"/>
</dbReference>
<dbReference type="PIRSF" id="PIRSF015626">
    <property type="entry name" value="FdhD"/>
    <property type="match status" value="1"/>
</dbReference>
<dbReference type="SUPFAM" id="SSF53927">
    <property type="entry name" value="Cytidine deaminase-like"/>
    <property type="match status" value="1"/>
</dbReference>
<proteinExistence type="inferred from homology"/>
<reference key="1">
    <citation type="journal article" date="2004" name="Proc. Natl. Acad. Sci. U.S.A.">
        <title>Structural flexibility in the Burkholderia mallei genome.</title>
        <authorList>
            <person name="Nierman W.C."/>
            <person name="DeShazer D."/>
            <person name="Kim H.S."/>
            <person name="Tettelin H."/>
            <person name="Nelson K.E."/>
            <person name="Feldblyum T.V."/>
            <person name="Ulrich R.L."/>
            <person name="Ronning C.M."/>
            <person name="Brinkac L.M."/>
            <person name="Daugherty S.C."/>
            <person name="Davidsen T.D."/>
            <person name="DeBoy R.T."/>
            <person name="Dimitrov G."/>
            <person name="Dodson R.J."/>
            <person name="Durkin A.S."/>
            <person name="Gwinn M.L."/>
            <person name="Haft D.H."/>
            <person name="Khouri H.M."/>
            <person name="Kolonay J.F."/>
            <person name="Madupu R."/>
            <person name="Mohammoud Y."/>
            <person name="Nelson W.C."/>
            <person name="Radune D."/>
            <person name="Romero C.M."/>
            <person name="Sarria S."/>
            <person name="Selengut J."/>
            <person name="Shamblin C."/>
            <person name="Sullivan S.A."/>
            <person name="White O."/>
            <person name="Yu Y."/>
            <person name="Zafar N."/>
            <person name="Zhou L."/>
            <person name="Fraser C.M."/>
        </authorList>
    </citation>
    <scope>NUCLEOTIDE SEQUENCE [LARGE SCALE GENOMIC DNA]</scope>
    <source>
        <strain>ATCC 23344</strain>
    </source>
</reference>
<comment type="function">
    <text evidence="1">Required for formate dehydrogenase (FDH) activity. Acts as a sulfur carrier protein that transfers sulfur from IscS to the molybdenum cofactor prior to its insertion into FDH.</text>
</comment>
<comment type="subcellular location">
    <subcellularLocation>
        <location evidence="1">Cytoplasm</location>
    </subcellularLocation>
</comment>
<comment type="similarity">
    <text evidence="1">Belongs to the FdhD family.</text>
</comment>
<protein>
    <recommendedName>
        <fullName evidence="1">Sulfur carrier protein FdhD</fullName>
    </recommendedName>
</protein>
<organism>
    <name type="scientific">Burkholderia mallei (strain ATCC 23344)</name>
    <dbReference type="NCBI Taxonomy" id="243160"/>
    <lineage>
        <taxon>Bacteria</taxon>
        <taxon>Pseudomonadati</taxon>
        <taxon>Pseudomonadota</taxon>
        <taxon>Betaproteobacteria</taxon>
        <taxon>Burkholderiales</taxon>
        <taxon>Burkholderiaceae</taxon>
        <taxon>Burkholderia</taxon>
        <taxon>pseudomallei group</taxon>
    </lineage>
</organism>
<gene>
    <name evidence="1" type="primary">fdhD</name>
    <name type="ordered locus">BMA0201</name>
</gene>
<evidence type="ECO:0000255" key="1">
    <source>
        <dbReference type="HAMAP-Rule" id="MF_00187"/>
    </source>
</evidence>